<accession>Q94F30</accession>
<accession>B9DFG4</accession>
<accession>O23439</accession>
<accession>Q70G10</accession>
<accession>Q7DLT0</accession>
<name>ESD4_ARATH</name>
<keyword id="KW-0175">Coiled coil</keyword>
<keyword id="KW-0378">Hydrolase</keyword>
<keyword id="KW-0472">Membrane</keyword>
<keyword id="KW-0539">Nucleus</keyword>
<keyword id="KW-0645">Protease</keyword>
<keyword id="KW-1185">Reference proteome</keyword>
<keyword id="KW-0788">Thiol protease</keyword>
<keyword id="KW-0833">Ubl conjugation pathway</keyword>
<sequence>MGAVAINRKRSDESFNFINQQSTNPLRNSPYFQASKKRRFSFAMSEDSGKPASSNPTISRISRYPDAKAPLRREIHAPSRGILRYGKAKSNDYCEKDANFFVRKYDDAKRSALEALRFVNKGKDFVDLGDEVEKEEVVSDDSSVQAIEVIDCDDDEEKKNLQPSFSSGVTDVKKGENFRVEDTSMMLDSLSLDRDVDNDASSLEAYRKLMQSAEKRNSKLEALGFEIVLNEKKLSLLRQSRPKTVEKRVEVPREPFIPLTEDEEAEVYRAFSGRNRRKVLATHENSNIDITGEVLQCLTPSAWLNDEVINVYLELLKERETREPKKYLKCHYFNTFFYKKLVSDSGYNFKAVRRWTTQRKLGYALIDCDMIFVPIHRGVHWTLAVINNRESKLLYLDSLNGVDPMILNALAKYMGDEANEKSGKKIDANSWDMEFVEDLPQQKNGYDCGMFMLKYIDFFSRGLGLCFSQEHMPYFRLRTAKEILRLRAD</sequence>
<proteinExistence type="evidence at protein level"/>
<comment type="function">
    <text evidence="4 5">Protease that catalyzes two essential functions in the SUMO pathway: processing of full-length SUMOs to their mature forms and deconjugation of SUMO from targeted proteins. Cleaves precursors of SUM1 and SUM2, but not of SUM3 or SUM5. Able to release SUM1 and SUM2 from conjugates, but unable to cleave SUM3. Acts predominantly as an isopeptidase, cleaving SUMO-conjugated proteins better than SUMO peptides. Plays an important role in the control of flowering time.</text>
</comment>
<comment type="catalytic activity">
    <reaction>
        <text>Hydrolysis of the alpha-linked peptide bond in the sequence Gly-Gly-|-Ala-Thr-Tyr at the C-terminal end of the small ubiquitin-like modifier (SUMO) propeptide, Smt3, leading to the mature form of the protein. A second reaction involves the cleavage of an epsilon-linked peptide bond between the C-terminal glycine of the mature SUMO and the lysine epsilon-amino group of the target protein.</text>
        <dbReference type="EC" id="3.4.22.68"/>
    </reaction>
</comment>
<comment type="activity regulation">
    <text>Inhibited by thiol reagent and N-ethylmaleimide, but not by ubiquitin aldehyde, pepstatin A or benzamidine HCl.</text>
</comment>
<comment type="subunit">
    <text evidence="6 7 8">Interacts with NUA (via N-terminus). Interacts with KIN10 (PubMed:20855607).</text>
</comment>
<comment type="subcellular location">
    <subcellularLocation>
        <location evidence="4 6">Nucleus membrane</location>
        <topology evidence="4 6">Peripheral membrane protein</topology>
    </subcellularLocation>
    <text>The nuclear envelope localization is independent of the presence of the nuclear pore anchor NUA.</text>
</comment>
<comment type="tissue specificity">
    <text evidence="4">Expressed in seedlings, leaves, shoots, flowers and roots.</text>
</comment>
<comment type="induction">
    <text evidence="4">No circadian regulation.</text>
</comment>
<comment type="domain">
    <text>The N-terminal regulatory domain is required for peptidase activity in vitro.</text>
</comment>
<comment type="disruption phenotype">
    <text evidence="4 6">Early flowering under both long and short days and pleiotropic alterations in shoot development.</text>
</comment>
<comment type="similarity">
    <text evidence="9">Belongs to the peptidase C48 family.</text>
</comment>
<comment type="sequence caution" evidence="9">
    <conflict type="erroneous gene model prediction">
        <sequence resource="EMBL-CDS" id="CAB45994"/>
    </conflict>
</comment>
<comment type="sequence caution" evidence="9">
    <conflict type="erroneous gene model prediction">
        <sequence resource="EMBL-CDS" id="CAB78630"/>
    </conflict>
</comment>
<gene>
    <name type="primary">ESD4</name>
    <name type="ordered locus">At4g15880</name>
    <name type="ORF">dl3980w</name>
    <name type="ORF">FCAALL.406</name>
</gene>
<reference key="1">
    <citation type="journal article" date="2003" name="Plant Cell">
        <title>A nuclear protease required for flowering-time regulation in Arabidopsis reduces the abundance of SMALL UBIQUITIN-RELATED MODIFIER conjugates.</title>
        <authorList>
            <person name="Murtas G."/>
            <person name="Reeves P.H."/>
            <person name="Fu Y.F."/>
            <person name="Bancroft I."/>
            <person name="Dean C."/>
            <person name="Coupland G."/>
        </authorList>
    </citation>
    <scope>NUCLEOTIDE SEQUENCE [MRNA]</scope>
    <scope>FUNCTION</scope>
    <scope>REGULATION</scope>
    <scope>INDUCTION</scope>
    <scope>MUTAGENESIS OF CYS-448</scope>
    <scope>SUBCELLULAR LOCATION</scope>
    <scope>TISSUE SPECIFICITY</scope>
    <scope>DISRUPTION PHENOTYPE</scope>
</reference>
<reference key="2">
    <citation type="journal article" date="1998" name="Nature">
        <title>Analysis of 1.9 Mb of contiguous sequence from chromosome 4 of Arabidopsis thaliana.</title>
        <authorList>
            <person name="Bevan M."/>
            <person name="Bancroft I."/>
            <person name="Bent E."/>
            <person name="Love K."/>
            <person name="Goodman H.M."/>
            <person name="Dean C."/>
            <person name="Bergkamp R."/>
            <person name="Dirkse W."/>
            <person name="van Staveren M."/>
            <person name="Stiekema W."/>
            <person name="Drost L."/>
            <person name="Ridley P."/>
            <person name="Hudson S.-A."/>
            <person name="Patel K."/>
            <person name="Murphy G."/>
            <person name="Piffanelli P."/>
            <person name="Wedler H."/>
            <person name="Wedler E."/>
            <person name="Wambutt R."/>
            <person name="Weitzenegger T."/>
            <person name="Pohl T."/>
            <person name="Terryn N."/>
            <person name="Gielen J."/>
            <person name="Villarroel R."/>
            <person name="De Clercq R."/>
            <person name="van Montagu M."/>
            <person name="Lecharny A."/>
            <person name="Aubourg S."/>
            <person name="Gy I."/>
            <person name="Kreis M."/>
            <person name="Lao N."/>
            <person name="Kavanagh T."/>
            <person name="Hempel S."/>
            <person name="Kotter P."/>
            <person name="Entian K.-D."/>
            <person name="Rieger M."/>
            <person name="Schaefer M."/>
            <person name="Funk B."/>
            <person name="Mueller-Auer S."/>
            <person name="Silvey M."/>
            <person name="James R."/>
            <person name="Monfort A."/>
            <person name="Pons A."/>
            <person name="Puigdomenech P."/>
            <person name="Douka A."/>
            <person name="Voukelatou E."/>
            <person name="Milioni D."/>
            <person name="Hatzopoulos P."/>
            <person name="Piravandi E."/>
            <person name="Obermaier B."/>
            <person name="Hilbert H."/>
            <person name="Duesterhoeft A."/>
            <person name="Moores T."/>
            <person name="Jones J.D.G."/>
            <person name="Eneva T."/>
            <person name="Palme K."/>
            <person name="Benes V."/>
            <person name="Rechmann S."/>
            <person name="Ansorge W."/>
            <person name="Cooke R."/>
            <person name="Berger C."/>
            <person name="Delseny M."/>
            <person name="Voet M."/>
            <person name="Volckaert G."/>
            <person name="Mewes H.-W."/>
            <person name="Klosterman S."/>
            <person name="Schueller C."/>
            <person name="Chalwatzis N."/>
        </authorList>
    </citation>
    <scope>NUCLEOTIDE SEQUENCE [LARGE SCALE GENOMIC DNA]</scope>
    <source>
        <strain>cv. Columbia</strain>
    </source>
</reference>
<reference key="3">
    <citation type="journal article" date="1999" name="Nature">
        <title>Sequence and analysis of chromosome 4 of the plant Arabidopsis thaliana.</title>
        <authorList>
            <person name="Mayer K.F.X."/>
            <person name="Schueller C."/>
            <person name="Wambutt R."/>
            <person name="Murphy G."/>
            <person name="Volckaert G."/>
            <person name="Pohl T."/>
            <person name="Duesterhoeft A."/>
            <person name="Stiekema W."/>
            <person name="Entian K.-D."/>
            <person name="Terryn N."/>
            <person name="Harris B."/>
            <person name="Ansorge W."/>
            <person name="Brandt P."/>
            <person name="Grivell L.A."/>
            <person name="Rieger M."/>
            <person name="Weichselgartner M."/>
            <person name="de Simone V."/>
            <person name="Obermaier B."/>
            <person name="Mache R."/>
            <person name="Mueller M."/>
            <person name="Kreis M."/>
            <person name="Delseny M."/>
            <person name="Puigdomenech P."/>
            <person name="Watson M."/>
            <person name="Schmidtheini T."/>
            <person name="Reichert B."/>
            <person name="Portetelle D."/>
            <person name="Perez-Alonso M."/>
            <person name="Boutry M."/>
            <person name="Bancroft I."/>
            <person name="Vos P."/>
            <person name="Hoheisel J."/>
            <person name="Zimmermann W."/>
            <person name="Wedler H."/>
            <person name="Ridley P."/>
            <person name="Langham S.-A."/>
            <person name="McCullagh B."/>
            <person name="Bilham L."/>
            <person name="Robben J."/>
            <person name="van der Schueren J."/>
            <person name="Grymonprez B."/>
            <person name="Chuang Y.-J."/>
            <person name="Vandenbussche F."/>
            <person name="Braeken M."/>
            <person name="Weltjens I."/>
            <person name="Voet M."/>
            <person name="Bastiaens I."/>
            <person name="Aert R."/>
            <person name="Defoor E."/>
            <person name="Weitzenegger T."/>
            <person name="Bothe G."/>
            <person name="Ramsperger U."/>
            <person name="Hilbert H."/>
            <person name="Braun M."/>
            <person name="Holzer E."/>
            <person name="Brandt A."/>
            <person name="Peters S."/>
            <person name="van Staveren M."/>
            <person name="Dirkse W."/>
            <person name="Mooijman P."/>
            <person name="Klein Lankhorst R."/>
            <person name="Rose M."/>
            <person name="Hauf J."/>
            <person name="Koetter P."/>
            <person name="Berneiser S."/>
            <person name="Hempel S."/>
            <person name="Feldpausch M."/>
            <person name="Lamberth S."/>
            <person name="Van den Daele H."/>
            <person name="De Keyser A."/>
            <person name="Buysshaert C."/>
            <person name="Gielen J."/>
            <person name="Villarroel R."/>
            <person name="De Clercq R."/>
            <person name="van Montagu M."/>
            <person name="Rogers J."/>
            <person name="Cronin A."/>
            <person name="Quail M.A."/>
            <person name="Bray-Allen S."/>
            <person name="Clark L."/>
            <person name="Doggett J."/>
            <person name="Hall S."/>
            <person name="Kay M."/>
            <person name="Lennard N."/>
            <person name="McLay K."/>
            <person name="Mayes R."/>
            <person name="Pettett A."/>
            <person name="Rajandream M.A."/>
            <person name="Lyne M."/>
            <person name="Benes V."/>
            <person name="Rechmann S."/>
            <person name="Borkova D."/>
            <person name="Bloecker H."/>
            <person name="Scharfe M."/>
            <person name="Grimm M."/>
            <person name="Loehnert T.-H."/>
            <person name="Dose S."/>
            <person name="de Haan M."/>
            <person name="Maarse A.C."/>
            <person name="Schaefer M."/>
            <person name="Mueller-Auer S."/>
            <person name="Gabel C."/>
            <person name="Fuchs M."/>
            <person name="Fartmann B."/>
            <person name="Granderath K."/>
            <person name="Dauner D."/>
            <person name="Herzl A."/>
            <person name="Neumann S."/>
            <person name="Argiriou A."/>
            <person name="Vitale D."/>
            <person name="Liguori R."/>
            <person name="Piravandi E."/>
            <person name="Massenet O."/>
            <person name="Quigley F."/>
            <person name="Clabauld G."/>
            <person name="Muendlein A."/>
            <person name="Felber R."/>
            <person name="Schnabl S."/>
            <person name="Hiller R."/>
            <person name="Schmidt W."/>
            <person name="Lecharny A."/>
            <person name="Aubourg S."/>
            <person name="Chefdor F."/>
            <person name="Cooke R."/>
            <person name="Berger C."/>
            <person name="Monfort A."/>
            <person name="Casacuberta E."/>
            <person name="Gibbons T."/>
            <person name="Weber N."/>
            <person name="Vandenbol M."/>
            <person name="Bargues M."/>
            <person name="Terol J."/>
            <person name="Torres A."/>
            <person name="Perez-Perez A."/>
            <person name="Purnelle B."/>
            <person name="Bent E."/>
            <person name="Johnson S."/>
            <person name="Tacon D."/>
            <person name="Jesse T."/>
            <person name="Heijnen L."/>
            <person name="Schwarz S."/>
            <person name="Scholler P."/>
            <person name="Heber S."/>
            <person name="Francs P."/>
            <person name="Bielke C."/>
            <person name="Frishman D."/>
            <person name="Haase D."/>
            <person name="Lemcke K."/>
            <person name="Mewes H.-W."/>
            <person name="Stocker S."/>
            <person name="Zaccaria P."/>
            <person name="Bevan M."/>
            <person name="Wilson R.K."/>
            <person name="de la Bastide M."/>
            <person name="Habermann K."/>
            <person name="Parnell L."/>
            <person name="Dedhia N."/>
            <person name="Gnoj L."/>
            <person name="Schutz K."/>
            <person name="Huang E."/>
            <person name="Spiegel L."/>
            <person name="Sekhon M."/>
            <person name="Murray J."/>
            <person name="Sheet P."/>
            <person name="Cordes M."/>
            <person name="Abu-Threideh J."/>
            <person name="Stoneking T."/>
            <person name="Kalicki J."/>
            <person name="Graves T."/>
            <person name="Harmon G."/>
            <person name="Edwards J."/>
            <person name="Latreille P."/>
            <person name="Courtney L."/>
            <person name="Cloud J."/>
            <person name="Abbott A."/>
            <person name="Scott K."/>
            <person name="Johnson D."/>
            <person name="Minx P."/>
            <person name="Bentley D."/>
            <person name="Fulton B."/>
            <person name="Miller N."/>
            <person name="Greco T."/>
            <person name="Kemp K."/>
            <person name="Kramer J."/>
            <person name="Fulton L."/>
            <person name="Mardis E."/>
            <person name="Dante M."/>
            <person name="Pepin K."/>
            <person name="Hillier L.W."/>
            <person name="Nelson J."/>
            <person name="Spieth J."/>
            <person name="Ryan E."/>
            <person name="Andrews S."/>
            <person name="Geisel C."/>
            <person name="Layman D."/>
            <person name="Du H."/>
            <person name="Ali J."/>
            <person name="Berghoff A."/>
            <person name="Jones K."/>
            <person name="Drone K."/>
            <person name="Cotton M."/>
            <person name="Joshu C."/>
            <person name="Antonoiu B."/>
            <person name="Zidanic M."/>
            <person name="Strong C."/>
            <person name="Sun H."/>
            <person name="Lamar B."/>
            <person name="Yordan C."/>
            <person name="Ma P."/>
            <person name="Zhong J."/>
            <person name="Preston R."/>
            <person name="Vil D."/>
            <person name="Shekher M."/>
            <person name="Matero A."/>
            <person name="Shah R."/>
            <person name="Swaby I.K."/>
            <person name="O'Shaughnessy A."/>
            <person name="Rodriguez M."/>
            <person name="Hoffman J."/>
            <person name="Till S."/>
            <person name="Granat S."/>
            <person name="Shohdy N."/>
            <person name="Hasegawa A."/>
            <person name="Hameed A."/>
            <person name="Lodhi M."/>
            <person name="Johnson A."/>
            <person name="Chen E."/>
            <person name="Marra M.A."/>
            <person name="Martienssen R."/>
            <person name="McCombie W.R."/>
        </authorList>
    </citation>
    <scope>NUCLEOTIDE SEQUENCE [LARGE SCALE GENOMIC DNA]</scope>
    <source>
        <strain>cv. Columbia</strain>
    </source>
</reference>
<reference key="4">
    <citation type="journal article" date="2017" name="Plant J.">
        <title>Araport11: a complete reannotation of the Arabidopsis thaliana reference genome.</title>
        <authorList>
            <person name="Cheng C.Y."/>
            <person name="Krishnakumar V."/>
            <person name="Chan A.P."/>
            <person name="Thibaud-Nissen F."/>
            <person name="Schobel S."/>
            <person name="Town C.D."/>
        </authorList>
    </citation>
    <scope>GENOME REANNOTATION</scope>
    <source>
        <strain>cv. Columbia</strain>
    </source>
</reference>
<reference key="5">
    <citation type="journal article" date="2003" name="Science">
        <title>Empirical analysis of transcriptional activity in the Arabidopsis genome.</title>
        <authorList>
            <person name="Yamada K."/>
            <person name="Lim J."/>
            <person name="Dale J.M."/>
            <person name="Chen H."/>
            <person name="Shinn P."/>
            <person name="Palm C.J."/>
            <person name="Southwick A.M."/>
            <person name="Wu H.C."/>
            <person name="Kim C.J."/>
            <person name="Nguyen M."/>
            <person name="Pham P.K."/>
            <person name="Cheuk R.F."/>
            <person name="Karlin-Newmann G."/>
            <person name="Liu S.X."/>
            <person name="Lam B."/>
            <person name="Sakano H."/>
            <person name="Wu T."/>
            <person name="Yu G."/>
            <person name="Miranda M."/>
            <person name="Quach H.L."/>
            <person name="Tripp M."/>
            <person name="Chang C.H."/>
            <person name="Lee J.M."/>
            <person name="Toriumi M.J."/>
            <person name="Chan M.M."/>
            <person name="Tang C.C."/>
            <person name="Onodera C.S."/>
            <person name="Deng J.M."/>
            <person name="Akiyama K."/>
            <person name="Ansari Y."/>
            <person name="Arakawa T."/>
            <person name="Banh J."/>
            <person name="Banno F."/>
            <person name="Bowser L."/>
            <person name="Brooks S.Y."/>
            <person name="Carninci P."/>
            <person name="Chao Q."/>
            <person name="Choy N."/>
            <person name="Enju A."/>
            <person name="Goldsmith A.D."/>
            <person name="Gurjal M."/>
            <person name="Hansen N.F."/>
            <person name="Hayashizaki Y."/>
            <person name="Johnson-Hopson C."/>
            <person name="Hsuan V.W."/>
            <person name="Iida K."/>
            <person name="Karnes M."/>
            <person name="Khan S."/>
            <person name="Koesema E."/>
            <person name="Ishida J."/>
            <person name="Jiang P.X."/>
            <person name="Jones T."/>
            <person name="Kawai J."/>
            <person name="Kamiya A."/>
            <person name="Meyers C."/>
            <person name="Nakajima M."/>
            <person name="Narusaka M."/>
            <person name="Seki M."/>
            <person name="Sakurai T."/>
            <person name="Satou M."/>
            <person name="Tamse R."/>
            <person name="Vaysberg M."/>
            <person name="Wallender E.K."/>
            <person name="Wong C."/>
            <person name="Yamamura Y."/>
            <person name="Yuan S."/>
            <person name="Shinozaki K."/>
            <person name="Davis R.W."/>
            <person name="Theologis A."/>
            <person name="Ecker J.R."/>
        </authorList>
    </citation>
    <scope>NUCLEOTIDE SEQUENCE [LARGE SCALE MRNA]</scope>
    <source>
        <strain>cv. Columbia</strain>
    </source>
</reference>
<reference key="6">
    <citation type="journal article" date="2009" name="DNA Res.">
        <title>Analysis of multiple occurrences of alternative splicing events in Arabidopsis thaliana using novel sequenced full-length cDNAs.</title>
        <authorList>
            <person name="Iida K."/>
            <person name="Fukami-Kobayashi K."/>
            <person name="Toyoda A."/>
            <person name="Sakaki Y."/>
            <person name="Kobayashi M."/>
            <person name="Seki M."/>
            <person name="Shinozaki K."/>
        </authorList>
    </citation>
    <scope>NUCLEOTIDE SEQUENCE [LARGE SCALE MRNA] OF 1-422</scope>
    <source>
        <strain>cv. Columbia</strain>
    </source>
</reference>
<reference key="7">
    <citation type="journal article" date="1997" name="Gene">
        <title>Structure, organization and putative function of the genes identified within a 23.9 kb fragment from Arabidopsis thaliana chromosome IV sequenced in the framework of the ESSA programme.</title>
        <authorList>
            <person name="Aubourg S."/>
            <person name="Takvorian A."/>
            <person name="Cheron A."/>
            <person name="Kreis M."/>
            <person name="Lecharny A."/>
        </authorList>
    </citation>
    <scope>NUCLEOTIDE SEQUENCE [GENOMIC DNA / MRNA] OF 46-441</scope>
    <source>
        <tissue>Dry seed</tissue>
    </source>
</reference>
<reference key="8">
    <citation type="journal article" date="2006" name="Biochem. J.">
        <title>Evolution of a signalling system that incorporates both redundancy and diversity: Arabidopsis SUMOylation.</title>
        <authorList>
            <person name="Chosed R."/>
            <person name="Mukherjee S."/>
            <person name="Lois L.M."/>
            <person name="Orth K."/>
        </authorList>
    </citation>
    <scope>FUNCTION</scope>
</reference>
<reference key="9">
    <citation type="journal article" date="2006" name="Plant Physiol.">
        <title>SUMO-conjugating and SUMO-deconjugating enzymes from Arabidopsis.</title>
        <authorList>
            <person name="Colby T."/>
            <person name="Matthai A."/>
            <person name="Boeckelmann A."/>
            <person name="Stuible H.P."/>
        </authorList>
    </citation>
    <scope>GENE FAMILY</scope>
    <scope>NOMENCLATURE</scope>
</reference>
<reference key="10">
    <citation type="journal article" date="2007" name="Plant Cell">
        <title>NUCLEAR PORE ANCHOR, the Arabidopsis homolog of Tpr/Mlp1/Mlp2/megator, is involved in mRNA export and SUMO homeostasis and affects diverse aspects of plant development.</title>
        <authorList>
            <person name="Xu X.M."/>
            <person name="Rose A."/>
            <person name="Muthuswamy S."/>
            <person name="Jeong S.Y."/>
            <person name="Venkatakrishnan S."/>
            <person name="Zhao Q."/>
            <person name="Meier I."/>
        </authorList>
    </citation>
    <scope>INTERACTION WITH NUA</scope>
    <scope>SUBCELLULAR LOCATION</scope>
    <scope>DISRUPTION PHENOTYPE</scope>
</reference>
<reference key="11">
    <citation type="journal article" date="2007" name="Plant Signal. Behav.">
        <title>NUA Activities at the Plant Nuclear Pore.</title>
        <authorList>
            <person name="Xu X.M."/>
            <person name="Rose A."/>
            <person name="Meier I."/>
        </authorList>
    </citation>
    <scope>INTERACTION WITH NUA</scope>
</reference>
<reference key="12">
    <citation type="journal article" date="2010" name="Proc. Natl. Acad. Sci. U.S.A.">
        <title>Proteome-wide screens for small ubiquitin-like modifier (SUMO) substrates identify Arabidopsis proteins implicated in diverse biological processes.</title>
        <authorList>
            <person name="Elrouby N."/>
            <person name="Coupland G."/>
        </authorList>
    </citation>
    <scope>INTERACTION WITH KIN10</scope>
</reference>
<feature type="chain" id="PRO_0000395972" description="Ubiquitin-like-specific protease ESD4">
    <location>
        <begin position="1"/>
        <end position="489"/>
    </location>
</feature>
<feature type="region of interest" description="Disordered" evidence="3">
    <location>
        <begin position="43"/>
        <end position="66"/>
    </location>
</feature>
<feature type="coiled-coil region" evidence="2">
    <location>
        <begin position="200"/>
        <end position="223"/>
    </location>
</feature>
<feature type="compositionally biased region" description="Polar residues" evidence="3">
    <location>
        <begin position="51"/>
        <end position="60"/>
    </location>
</feature>
<feature type="active site" evidence="1">
    <location>
        <position position="380"/>
    </location>
</feature>
<feature type="active site" evidence="1">
    <location>
        <position position="397"/>
    </location>
</feature>
<feature type="active site" evidence="1">
    <location>
        <position position="448"/>
    </location>
</feature>
<feature type="mutagenesis site" description="Loss of protease activity." evidence="4">
    <original>C</original>
    <variation>S</variation>
    <location>
        <position position="448"/>
    </location>
</feature>
<feature type="sequence conflict" description="In Ref. 1; CAE46910." evidence="9" ref="1">
    <original>K</original>
    <variation>P</variation>
    <location>
        <position position="325"/>
    </location>
</feature>
<feature type="sequence conflict" description="In Ref. 1; CAE46910." evidence="9" ref="1">
    <original>H</original>
    <variation>L</variation>
    <location>
        <position position="331"/>
    </location>
</feature>
<organism>
    <name type="scientific">Arabidopsis thaliana</name>
    <name type="common">Mouse-ear cress</name>
    <dbReference type="NCBI Taxonomy" id="3702"/>
    <lineage>
        <taxon>Eukaryota</taxon>
        <taxon>Viridiplantae</taxon>
        <taxon>Streptophyta</taxon>
        <taxon>Embryophyta</taxon>
        <taxon>Tracheophyta</taxon>
        <taxon>Spermatophyta</taxon>
        <taxon>Magnoliopsida</taxon>
        <taxon>eudicotyledons</taxon>
        <taxon>Gunneridae</taxon>
        <taxon>Pentapetalae</taxon>
        <taxon>rosids</taxon>
        <taxon>malvids</taxon>
        <taxon>Brassicales</taxon>
        <taxon>Brassicaceae</taxon>
        <taxon>Camelineae</taxon>
        <taxon>Arabidopsis</taxon>
    </lineage>
</organism>
<protein>
    <recommendedName>
        <fullName>Ubiquitin-like-specific protease ESD4</fullName>
        <ecNumber>3.4.22.68</ecNumber>
    </recommendedName>
    <alternativeName>
        <fullName>Protein EARLY IN SHORT DAYS 4</fullName>
        <shortName>AtESD4</shortName>
    </alternativeName>
</protein>
<evidence type="ECO:0000250" key="1"/>
<evidence type="ECO:0000255" key="2"/>
<evidence type="ECO:0000256" key="3">
    <source>
        <dbReference type="SAM" id="MobiDB-lite"/>
    </source>
</evidence>
<evidence type="ECO:0000269" key="4">
    <source>
    </source>
</evidence>
<evidence type="ECO:0000269" key="5">
    <source>
    </source>
</evidence>
<evidence type="ECO:0000269" key="6">
    <source>
    </source>
</evidence>
<evidence type="ECO:0000269" key="7">
    <source>
    </source>
</evidence>
<evidence type="ECO:0000269" key="8">
    <source>
    </source>
</evidence>
<evidence type="ECO:0000305" key="9"/>
<dbReference type="EC" id="3.4.22.68"/>
<dbReference type="EMBL" id="AJ582719">
    <property type="protein sequence ID" value="CAE46910.1"/>
    <property type="molecule type" value="mRNA"/>
</dbReference>
<dbReference type="EMBL" id="Z97339">
    <property type="protein sequence ID" value="CAB45994.1"/>
    <property type="status" value="ALT_SEQ"/>
    <property type="molecule type" value="Genomic_DNA"/>
</dbReference>
<dbReference type="EMBL" id="AL161542">
    <property type="protein sequence ID" value="CAB78630.1"/>
    <property type="status" value="ALT_SEQ"/>
    <property type="molecule type" value="Genomic_DNA"/>
</dbReference>
<dbReference type="EMBL" id="CP002687">
    <property type="protein sequence ID" value="AEE83661.1"/>
    <property type="molecule type" value="Genomic_DNA"/>
</dbReference>
<dbReference type="EMBL" id="AF386934">
    <property type="protein sequence ID" value="AAK62379.1"/>
    <property type="molecule type" value="mRNA"/>
</dbReference>
<dbReference type="EMBL" id="AY081548">
    <property type="protein sequence ID" value="AAM10110.1"/>
    <property type="molecule type" value="mRNA"/>
</dbReference>
<dbReference type="EMBL" id="AK316760">
    <property type="protein sequence ID" value="BAH19481.1"/>
    <property type="molecule type" value="mRNA"/>
</dbReference>
<dbReference type="EMBL" id="Y11155">
    <property type="protein sequence ID" value="CAA72042.1"/>
    <property type="molecule type" value="mRNA"/>
</dbReference>
<dbReference type="EMBL" id="Y11187">
    <property type="protein sequence ID" value="CAA72071.1"/>
    <property type="molecule type" value="Genomic_DNA"/>
</dbReference>
<dbReference type="PIR" id="E71424">
    <property type="entry name" value="E71424"/>
</dbReference>
<dbReference type="PIR" id="H85175">
    <property type="entry name" value="H85175"/>
</dbReference>
<dbReference type="RefSeq" id="NP_567478.1">
    <property type="nucleotide sequence ID" value="NM_117680.4"/>
</dbReference>
<dbReference type="SMR" id="Q94F30"/>
<dbReference type="BioGRID" id="12563">
    <property type="interactions" value="3"/>
</dbReference>
<dbReference type="FunCoup" id="Q94F30">
    <property type="interactions" value="674"/>
</dbReference>
<dbReference type="IntAct" id="Q94F30">
    <property type="interactions" value="1"/>
</dbReference>
<dbReference type="STRING" id="3702.Q94F30"/>
<dbReference type="MEROPS" id="C48.022"/>
<dbReference type="iPTMnet" id="Q94F30"/>
<dbReference type="PaxDb" id="3702-AT4G15880.1"/>
<dbReference type="ProteomicsDB" id="220577"/>
<dbReference type="EnsemblPlants" id="AT4G15880.1">
    <property type="protein sequence ID" value="AT4G15880.1"/>
    <property type="gene ID" value="AT4G15880"/>
</dbReference>
<dbReference type="GeneID" id="827269"/>
<dbReference type="Gramene" id="AT4G15880.1">
    <property type="protein sequence ID" value="AT4G15880.1"/>
    <property type="gene ID" value="AT4G15880"/>
</dbReference>
<dbReference type="KEGG" id="ath:AT4G15880"/>
<dbReference type="Araport" id="AT4G15880"/>
<dbReference type="TAIR" id="AT4G15880">
    <property type="gene designation" value="ESD4"/>
</dbReference>
<dbReference type="eggNOG" id="KOG0778">
    <property type="taxonomic scope" value="Eukaryota"/>
</dbReference>
<dbReference type="HOGENOM" id="CLU_024324_6_2_1"/>
<dbReference type="InParanoid" id="Q94F30"/>
<dbReference type="OMA" id="SWKLEYV"/>
<dbReference type="PhylomeDB" id="Q94F30"/>
<dbReference type="BRENDA" id="3.4.22.68">
    <property type="organism ID" value="399"/>
</dbReference>
<dbReference type="PRO" id="PR:Q94F30"/>
<dbReference type="Proteomes" id="UP000006548">
    <property type="component" value="Chromosome 4"/>
</dbReference>
<dbReference type="ExpressionAtlas" id="Q94F30">
    <property type="expression patterns" value="baseline and differential"/>
</dbReference>
<dbReference type="GO" id="GO:0031965">
    <property type="term" value="C:nuclear membrane"/>
    <property type="evidence" value="ECO:0007669"/>
    <property type="project" value="UniProtKB-SubCell"/>
</dbReference>
<dbReference type="GO" id="GO:0005634">
    <property type="term" value="C:nucleus"/>
    <property type="evidence" value="ECO:0000314"/>
    <property type="project" value="TAIR"/>
</dbReference>
<dbReference type="GO" id="GO:0019900">
    <property type="term" value="F:kinase binding"/>
    <property type="evidence" value="ECO:0000353"/>
    <property type="project" value="UniProtKB"/>
</dbReference>
<dbReference type="GO" id="GO:0070139">
    <property type="term" value="F:SUMO-specific endopeptidase activity"/>
    <property type="evidence" value="ECO:0000314"/>
    <property type="project" value="UniProtKB"/>
</dbReference>
<dbReference type="GO" id="GO:0009911">
    <property type="term" value="P:positive regulation of flower development"/>
    <property type="evidence" value="ECO:0000315"/>
    <property type="project" value="TAIR"/>
</dbReference>
<dbReference type="GO" id="GO:0016926">
    <property type="term" value="P:protein desumoylation"/>
    <property type="evidence" value="ECO:0000314"/>
    <property type="project" value="UniProtKB"/>
</dbReference>
<dbReference type="GO" id="GO:0006508">
    <property type="term" value="P:proteolysis"/>
    <property type="evidence" value="ECO:0007669"/>
    <property type="project" value="UniProtKB-KW"/>
</dbReference>
<dbReference type="GO" id="GO:0009909">
    <property type="term" value="P:regulation of flower development"/>
    <property type="evidence" value="ECO:0000315"/>
    <property type="project" value="TAIR"/>
</dbReference>
<dbReference type="FunFam" id="3.40.395.10:FF:000005">
    <property type="entry name" value="Ubiquitin-like-specific protease ESD4"/>
    <property type="match status" value="1"/>
</dbReference>
<dbReference type="Gene3D" id="3.40.395.10">
    <property type="entry name" value="Adenoviral Proteinase, Chain A"/>
    <property type="match status" value="1"/>
</dbReference>
<dbReference type="InterPro" id="IPR038765">
    <property type="entry name" value="Papain-like_cys_pep_sf"/>
</dbReference>
<dbReference type="InterPro" id="IPR003653">
    <property type="entry name" value="Peptidase_C48_C"/>
</dbReference>
<dbReference type="PANTHER" id="PTHR12606">
    <property type="entry name" value="SENTRIN/SUMO-SPECIFIC PROTEASE"/>
    <property type="match status" value="1"/>
</dbReference>
<dbReference type="PANTHER" id="PTHR12606:SF156">
    <property type="entry name" value="UBIQUITIN-LIKE-SPECIFIC PROTEASE ESD4-RELATED"/>
    <property type="match status" value="1"/>
</dbReference>
<dbReference type="Pfam" id="PF02902">
    <property type="entry name" value="Peptidase_C48"/>
    <property type="match status" value="1"/>
</dbReference>
<dbReference type="SUPFAM" id="SSF54001">
    <property type="entry name" value="Cysteine proteinases"/>
    <property type="match status" value="1"/>
</dbReference>
<dbReference type="PROSITE" id="PS50600">
    <property type="entry name" value="ULP_PROTEASE"/>
    <property type="match status" value="1"/>
</dbReference>